<gene>
    <name type="ordered locus">ECU11_2090</name>
</gene>
<keyword id="KW-1185">Reference proteome</keyword>
<accession>Q8STZ1</accession>
<sequence>MMRTWMVYVVGLVGELYGSQVEETREMREMKEALERLFSRRLSDSEIEMVESLENGGNFETRVLVPVIFHKDKVVVSPAARYRDIEKEERVYVEEVIRRLRSLVWHSMVYIYVPKNNDWIMDLICKVSGMSSPQRLDDVALYKDTGGNCGMKFVDLVNKMFKQNADMLKKFGDLLSNGAETRILELPDSLSEDERRREVEMLQRVKEYGKMLCTEDKQKEIVEAQKIMCDACEQIWRREEDRKEFTMEIYSRYLNMKVMRGGVERDVEDPLIDHMDHYMLISTHKKYKCMDVVAELVRKVFVEDKDIEDSDVMSAVCSVRERKRLEEMREMEERKRKEEERAKNEEELLRMVEREEREKREESKGRGKKKRGNRGAGESKEESKGRGKRKRGNKGAGESKEEDRGEEGGVEAEDPLEEMAVGEAWRKKKGSGEKRISEEHHYKVHSRVLRWKKDAGEIKRELDEGYEKKWKNRSIEEIKEQKKVHDIVEVMKLLRDKEKCDRFFVRTGKYMKGKSERWKMVANGILEEGGEKKVGKVEVGLFKGEGGESVVYHLMFRPTETERTGRVGGSSFGKYDDVDEIKKEKSSDMFGFRYPSGVRCEMTSNRNEFRIEYRNRKNTSEVLRTLTILRIPET</sequence>
<evidence type="ECO:0000256" key="1">
    <source>
        <dbReference type="SAM" id="MobiDB-lite"/>
    </source>
</evidence>
<evidence type="ECO:0000305" key="2"/>
<organism>
    <name type="scientific">Encephalitozoon cuniculi (strain GB-M1)</name>
    <name type="common">Microsporidian parasite</name>
    <dbReference type="NCBI Taxonomy" id="284813"/>
    <lineage>
        <taxon>Eukaryota</taxon>
        <taxon>Fungi</taxon>
        <taxon>Fungi incertae sedis</taxon>
        <taxon>Microsporidia</taxon>
        <taxon>Unikaryonidae</taxon>
        <taxon>Encephalitozoon</taxon>
    </lineage>
</organism>
<protein>
    <recommendedName>
        <fullName>UPF0329 protein ECU11_2090</fullName>
    </recommendedName>
</protein>
<proteinExistence type="inferred from homology"/>
<feature type="chain" id="PRO_0000223179" description="UPF0329 protein ECU11_2090">
    <location>
        <begin position="1"/>
        <end position="634"/>
    </location>
</feature>
<feature type="region of interest" description="Disordered" evidence="1">
    <location>
        <begin position="354"/>
        <end position="438"/>
    </location>
</feature>
<feature type="compositionally biased region" description="Basic and acidic residues" evidence="1">
    <location>
        <begin position="354"/>
        <end position="365"/>
    </location>
</feature>
<feature type="compositionally biased region" description="Basic and acidic residues" evidence="1">
    <location>
        <begin position="397"/>
        <end position="407"/>
    </location>
</feature>
<feature type="compositionally biased region" description="Acidic residues" evidence="1">
    <location>
        <begin position="408"/>
        <end position="417"/>
    </location>
</feature>
<reference key="1">
    <citation type="journal article" date="2001" name="Nature">
        <title>Genome sequence and gene compaction of the eukaryote parasite Encephalitozoon cuniculi.</title>
        <authorList>
            <person name="Katinka M.D."/>
            <person name="Duprat S."/>
            <person name="Cornillot E."/>
            <person name="Metenier G."/>
            <person name="Thomarat F."/>
            <person name="Prensier G."/>
            <person name="Barbe V."/>
            <person name="Peyretaillade E."/>
            <person name="Brottier P."/>
            <person name="Wincker P."/>
            <person name="Delbac F."/>
            <person name="El Alaoui H."/>
            <person name="Peyret P."/>
            <person name="Saurin W."/>
            <person name="Gouy M."/>
            <person name="Weissenbach J."/>
            <person name="Vivares C.P."/>
        </authorList>
    </citation>
    <scope>NUCLEOTIDE SEQUENCE [LARGE SCALE GENOMIC DNA]</scope>
    <source>
        <strain>GB-M1</strain>
    </source>
</reference>
<name>YBK9_ENCCU</name>
<dbReference type="EMBL" id="AL590450">
    <property type="protein sequence ID" value="CAD26119.1"/>
    <property type="molecule type" value="Genomic_DNA"/>
</dbReference>
<dbReference type="RefSeq" id="NP_586515.1">
    <property type="nucleotide sequence ID" value="NM_001042348.1"/>
</dbReference>
<dbReference type="SMR" id="Q8STZ1"/>
<dbReference type="STRING" id="284813.Q8STZ1"/>
<dbReference type="GeneID" id="860169"/>
<dbReference type="KEGG" id="ecu:ECU11_2090"/>
<dbReference type="VEuPathDB" id="MicrosporidiaDB:ECU11_2090"/>
<dbReference type="HOGENOM" id="CLU_035434_0_0_1"/>
<dbReference type="InParanoid" id="Q8STZ1"/>
<dbReference type="Proteomes" id="UP000000819">
    <property type="component" value="Chromosome XI"/>
</dbReference>
<dbReference type="InterPro" id="IPR022115">
    <property type="entry name" value="DUF3654"/>
</dbReference>
<dbReference type="InterPro" id="IPR011667">
    <property type="entry name" value="UPF0329"/>
</dbReference>
<dbReference type="Pfam" id="PF07753">
    <property type="entry name" value="DUF1609"/>
    <property type="match status" value="1"/>
</dbReference>
<dbReference type="Pfam" id="PF12376">
    <property type="entry name" value="DUF3654"/>
    <property type="match status" value="1"/>
</dbReference>
<comment type="similarity">
    <text evidence="2">Belongs to the UPF0329 family.</text>
</comment>